<accession>Q5BAH7</accession>
<accession>C8VP70</accession>
<name>PPIL3_EMENI</name>
<sequence>MSVTLHTTHGDLKVELFCEAVPKTAENFIALCAAGAYNDTPFHRLIPGFMIQGGDISLGPAANSQGTTPMLPFDDIPKGGTSIYHPSALNQEIHLPALRHNTRGILSMASRPVKNQTAPGSQGATGPTINGSQFFITFAAAPHLDGSSTVFGKVLNLTAEDEGGDVLSKLEKANVKTDKKGKVVQPKENEETEYETLRINRVTIHANPFAT</sequence>
<proteinExistence type="inferred from homology"/>
<organism>
    <name type="scientific">Emericella nidulans (strain FGSC A4 / ATCC 38163 / CBS 112.46 / NRRL 194 / M139)</name>
    <name type="common">Aspergillus nidulans</name>
    <dbReference type="NCBI Taxonomy" id="227321"/>
    <lineage>
        <taxon>Eukaryota</taxon>
        <taxon>Fungi</taxon>
        <taxon>Dikarya</taxon>
        <taxon>Ascomycota</taxon>
        <taxon>Pezizomycotina</taxon>
        <taxon>Eurotiomycetes</taxon>
        <taxon>Eurotiomycetidae</taxon>
        <taxon>Eurotiales</taxon>
        <taxon>Aspergillaceae</taxon>
        <taxon>Aspergillus</taxon>
        <taxon>Aspergillus subgen. Nidulantes</taxon>
    </lineage>
</organism>
<feature type="chain" id="PRO_0000232970" description="Peptidyl-prolyl cis-trans isomerase-like 3">
    <location>
        <begin position="1"/>
        <end position="211"/>
    </location>
</feature>
<feature type="domain" description="PPIase cyclophilin-type" evidence="2">
    <location>
        <begin position="1"/>
        <end position="204"/>
    </location>
</feature>
<dbReference type="EC" id="5.2.1.8"/>
<dbReference type="EMBL" id="AACD01000040">
    <property type="protein sequence ID" value="EAA64159.1"/>
    <property type="status" value="ALT_INIT"/>
    <property type="molecule type" value="Genomic_DNA"/>
</dbReference>
<dbReference type="EMBL" id="BN001307">
    <property type="protein sequence ID" value="CBF86885.1"/>
    <property type="status" value="ALT_INIT"/>
    <property type="molecule type" value="Genomic_DNA"/>
</dbReference>
<dbReference type="RefSeq" id="XP_660057.1">
    <property type="nucleotide sequence ID" value="XM_654965.1"/>
</dbReference>
<dbReference type="SMR" id="Q5BAH7"/>
<dbReference type="STRING" id="227321.Q5BAH7"/>
<dbReference type="KEGG" id="ani:ANIA_02453"/>
<dbReference type="eggNOG" id="KOG0884">
    <property type="taxonomic scope" value="Eukaryota"/>
</dbReference>
<dbReference type="HOGENOM" id="CLU_012062_16_5_1"/>
<dbReference type="InParanoid" id="Q5BAH7"/>
<dbReference type="OrthoDB" id="271386at2759"/>
<dbReference type="Proteomes" id="UP000000560">
    <property type="component" value="Chromosome VII"/>
</dbReference>
<dbReference type="GO" id="GO:0071013">
    <property type="term" value="C:catalytic step 2 spliceosome"/>
    <property type="evidence" value="ECO:0000318"/>
    <property type="project" value="GO_Central"/>
</dbReference>
<dbReference type="GO" id="GO:0003755">
    <property type="term" value="F:peptidyl-prolyl cis-trans isomerase activity"/>
    <property type="evidence" value="ECO:0000318"/>
    <property type="project" value="GO_Central"/>
</dbReference>
<dbReference type="GO" id="GO:0006457">
    <property type="term" value="P:protein folding"/>
    <property type="evidence" value="ECO:0000318"/>
    <property type="project" value="GO_Central"/>
</dbReference>
<dbReference type="FunFam" id="2.40.100.10:FF:000041">
    <property type="entry name" value="Peptidyl-prolyl cis-trans isomerase"/>
    <property type="match status" value="1"/>
</dbReference>
<dbReference type="Gene3D" id="2.40.100.10">
    <property type="entry name" value="Cyclophilin-like"/>
    <property type="match status" value="1"/>
</dbReference>
<dbReference type="InterPro" id="IPR029000">
    <property type="entry name" value="Cyclophilin-like_dom_sf"/>
</dbReference>
<dbReference type="InterPro" id="IPR024936">
    <property type="entry name" value="Cyclophilin-type_PPIase"/>
</dbReference>
<dbReference type="InterPro" id="IPR020892">
    <property type="entry name" value="Cyclophilin-type_PPIase_CS"/>
</dbReference>
<dbReference type="InterPro" id="IPR002130">
    <property type="entry name" value="Cyclophilin-type_PPIase_dom"/>
</dbReference>
<dbReference type="InterPro" id="IPR044666">
    <property type="entry name" value="Cyclophilin_A-like"/>
</dbReference>
<dbReference type="PANTHER" id="PTHR45625:SF2">
    <property type="entry name" value="PEPTIDYL-PROLYL CIS-TRANS ISOMERASE-LIKE 3"/>
    <property type="match status" value="1"/>
</dbReference>
<dbReference type="PANTHER" id="PTHR45625">
    <property type="entry name" value="PEPTIDYL-PROLYL CIS-TRANS ISOMERASE-RELATED"/>
    <property type="match status" value="1"/>
</dbReference>
<dbReference type="Pfam" id="PF00160">
    <property type="entry name" value="Pro_isomerase"/>
    <property type="match status" value="1"/>
</dbReference>
<dbReference type="PIRSF" id="PIRSF001467">
    <property type="entry name" value="Peptidylpro_ismrse"/>
    <property type="match status" value="1"/>
</dbReference>
<dbReference type="PRINTS" id="PR00153">
    <property type="entry name" value="CSAPPISMRASE"/>
</dbReference>
<dbReference type="SUPFAM" id="SSF50891">
    <property type="entry name" value="Cyclophilin-like"/>
    <property type="match status" value="1"/>
</dbReference>
<dbReference type="PROSITE" id="PS00170">
    <property type="entry name" value="CSA_PPIASE_1"/>
    <property type="match status" value="1"/>
</dbReference>
<dbReference type="PROSITE" id="PS50072">
    <property type="entry name" value="CSA_PPIASE_2"/>
    <property type="match status" value="1"/>
</dbReference>
<keyword id="KW-0413">Isomerase</keyword>
<keyword id="KW-1185">Reference proteome</keyword>
<keyword id="KW-0697">Rotamase</keyword>
<reference key="1">
    <citation type="journal article" date="2005" name="Nature">
        <title>Sequencing of Aspergillus nidulans and comparative analysis with A. fumigatus and A. oryzae.</title>
        <authorList>
            <person name="Galagan J.E."/>
            <person name="Calvo S.E."/>
            <person name="Cuomo C."/>
            <person name="Ma L.-J."/>
            <person name="Wortman J.R."/>
            <person name="Batzoglou S."/>
            <person name="Lee S.-I."/>
            <person name="Bastuerkmen M."/>
            <person name="Spevak C.C."/>
            <person name="Clutterbuck J."/>
            <person name="Kapitonov V."/>
            <person name="Jurka J."/>
            <person name="Scazzocchio C."/>
            <person name="Farman M.L."/>
            <person name="Butler J."/>
            <person name="Purcell S."/>
            <person name="Harris S."/>
            <person name="Braus G.H."/>
            <person name="Draht O."/>
            <person name="Busch S."/>
            <person name="D'Enfert C."/>
            <person name="Bouchier C."/>
            <person name="Goldman G.H."/>
            <person name="Bell-Pedersen D."/>
            <person name="Griffiths-Jones S."/>
            <person name="Doonan J.H."/>
            <person name="Yu J."/>
            <person name="Vienken K."/>
            <person name="Pain A."/>
            <person name="Freitag M."/>
            <person name="Selker E.U."/>
            <person name="Archer D.B."/>
            <person name="Penalva M.A."/>
            <person name="Oakley B.R."/>
            <person name="Momany M."/>
            <person name="Tanaka T."/>
            <person name="Kumagai T."/>
            <person name="Asai K."/>
            <person name="Machida M."/>
            <person name="Nierman W.C."/>
            <person name="Denning D.W."/>
            <person name="Caddick M.X."/>
            <person name="Hynes M."/>
            <person name="Paoletti M."/>
            <person name="Fischer R."/>
            <person name="Miller B.L."/>
            <person name="Dyer P.S."/>
            <person name="Sachs M.S."/>
            <person name="Osmani S.A."/>
            <person name="Birren B.W."/>
        </authorList>
    </citation>
    <scope>NUCLEOTIDE SEQUENCE [LARGE SCALE GENOMIC DNA]</scope>
    <source>
        <strain>FGSC A4 / ATCC 38163 / CBS 112.46 / NRRL 194 / M139</strain>
    </source>
</reference>
<reference key="2">
    <citation type="journal article" date="2009" name="Fungal Genet. Biol.">
        <title>The 2008 update of the Aspergillus nidulans genome annotation: a community effort.</title>
        <authorList>
            <person name="Wortman J.R."/>
            <person name="Gilsenan J.M."/>
            <person name="Joardar V."/>
            <person name="Deegan J."/>
            <person name="Clutterbuck J."/>
            <person name="Andersen M.R."/>
            <person name="Archer D."/>
            <person name="Bencina M."/>
            <person name="Braus G."/>
            <person name="Coutinho P."/>
            <person name="von Dohren H."/>
            <person name="Doonan J."/>
            <person name="Driessen A.J."/>
            <person name="Durek P."/>
            <person name="Espeso E."/>
            <person name="Fekete E."/>
            <person name="Flipphi M."/>
            <person name="Estrada C.G."/>
            <person name="Geysens S."/>
            <person name="Goldman G."/>
            <person name="de Groot P.W."/>
            <person name="Hansen K."/>
            <person name="Harris S.D."/>
            <person name="Heinekamp T."/>
            <person name="Helmstaedt K."/>
            <person name="Henrissat B."/>
            <person name="Hofmann G."/>
            <person name="Homan T."/>
            <person name="Horio T."/>
            <person name="Horiuchi H."/>
            <person name="James S."/>
            <person name="Jones M."/>
            <person name="Karaffa L."/>
            <person name="Karanyi Z."/>
            <person name="Kato M."/>
            <person name="Keller N."/>
            <person name="Kelly D.E."/>
            <person name="Kiel J.A."/>
            <person name="Kim J.M."/>
            <person name="van der Klei I.J."/>
            <person name="Klis F.M."/>
            <person name="Kovalchuk A."/>
            <person name="Krasevec N."/>
            <person name="Kubicek C.P."/>
            <person name="Liu B."/>
            <person name="Maccabe A."/>
            <person name="Meyer V."/>
            <person name="Mirabito P."/>
            <person name="Miskei M."/>
            <person name="Mos M."/>
            <person name="Mullins J."/>
            <person name="Nelson D.R."/>
            <person name="Nielsen J."/>
            <person name="Oakley B.R."/>
            <person name="Osmani S.A."/>
            <person name="Pakula T."/>
            <person name="Paszewski A."/>
            <person name="Paulsen I."/>
            <person name="Pilsyk S."/>
            <person name="Pocsi I."/>
            <person name="Punt P.J."/>
            <person name="Ram A.F."/>
            <person name="Ren Q."/>
            <person name="Robellet X."/>
            <person name="Robson G."/>
            <person name="Seiboth B."/>
            <person name="van Solingen P."/>
            <person name="Specht T."/>
            <person name="Sun J."/>
            <person name="Taheri-Talesh N."/>
            <person name="Takeshita N."/>
            <person name="Ussery D."/>
            <person name="vanKuyk P.A."/>
            <person name="Visser H."/>
            <person name="van de Vondervoort P.J."/>
            <person name="de Vries R.P."/>
            <person name="Walton J."/>
            <person name="Xiang X."/>
            <person name="Xiong Y."/>
            <person name="Zeng A.P."/>
            <person name="Brandt B.W."/>
            <person name="Cornell M.J."/>
            <person name="van den Hondel C.A."/>
            <person name="Visser J."/>
            <person name="Oliver S.G."/>
            <person name="Turner G."/>
        </authorList>
    </citation>
    <scope>GENOME REANNOTATION</scope>
    <source>
        <strain>FGSC A4 / ATCC 38163 / CBS 112.46 / NRRL 194 / M139</strain>
    </source>
</reference>
<reference key="3">
    <citation type="submission" date="2006-02" db="UniProtKB">
        <authorList>
            <person name="Pemberton T.J."/>
        </authorList>
    </citation>
    <scope>IDENTIFICATION OF PROBABLE INITIATION SITE</scope>
</reference>
<comment type="function">
    <text evidence="1">PPIases accelerate the folding of proteins. It catalyzes the cis-trans isomerization of proline imidic peptide bonds in oligopeptides (By similarity).</text>
</comment>
<comment type="catalytic activity">
    <reaction>
        <text>[protein]-peptidylproline (omega=180) = [protein]-peptidylproline (omega=0)</text>
        <dbReference type="Rhea" id="RHEA:16237"/>
        <dbReference type="Rhea" id="RHEA-COMP:10747"/>
        <dbReference type="Rhea" id="RHEA-COMP:10748"/>
        <dbReference type="ChEBI" id="CHEBI:83833"/>
        <dbReference type="ChEBI" id="CHEBI:83834"/>
        <dbReference type="EC" id="5.2.1.8"/>
    </reaction>
</comment>
<comment type="similarity">
    <text evidence="3">Belongs to the cyclophilin-type PPIase family. PPIL3 subfamily.</text>
</comment>
<comment type="sequence caution" evidence="3">
    <conflict type="erroneous initiation">
        <sequence resource="EMBL-CDS" id="CBF86885"/>
    </conflict>
    <text>Extended N-terminus.</text>
</comment>
<comment type="sequence caution" evidence="3">
    <conflict type="erroneous initiation">
        <sequence resource="EMBL-CDS" id="EAA64159"/>
    </conflict>
    <text>Extended N-terminus.</text>
</comment>
<evidence type="ECO:0000250" key="1"/>
<evidence type="ECO:0000255" key="2">
    <source>
        <dbReference type="PROSITE-ProRule" id="PRU00156"/>
    </source>
</evidence>
<evidence type="ECO:0000305" key="3"/>
<gene>
    <name type="primary">cyp10</name>
    <name type="ORF">AN2453</name>
</gene>
<protein>
    <recommendedName>
        <fullName>Peptidyl-prolyl cis-trans isomerase-like 3</fullName>
        <shortName>PPIase</shortName>
        <ecNumber>5.2.1.8</ecNumber>
    </recommendedName>
    <alternativeName>
        <fullName>Rotamase</fullName>
    </alternativeName>
</protein>